<name>SYFA_STAAE</name>
<feature type="chain" id="PRO_1000071936" description="Phenylalanine--tRNA ligase alpha subunit">
    <location>
        <begin position="1"/>
        <end position="352"/>
    </location>
</feature>
<feature type="binding site" evidence="1">
    <location>
        <position position="258"/>
    </location>
    <ligand>
        <name>Mg(2+)</name>
        <dbReference type="ChEBI" id="CHEBI:18420"/>
        <note>shared with beta subunit</note>
    </ligand>
</feature>
<comment type="catalytic activity">
    <reaction evidence="1">
        <text>tRNA(Phe) + L-phenylalanine + ATP = L-phenylalanyl-tRNA(Phe) + AMP + diphosphate + H(+)</text>
        <dbReference type="Rhea" id="RHEA:19413"/>
        <dbReference type="Rhea" id="RHEA-COMP:9668"/>
        <dbReference type="Rhea" id="RHEA-COMP:9699"/>
        <dbReference type="ChEBI" id="CHEBI:15378"/>
        <dbReference type="ChEBI" id="CHEBI:30616"/>
        <dbReference type="ChEBI" id="CHEBI:33019"/>
        <dbReference type="ChEBI" id="CHEBI:58095"/>
        <dbReference type="ChEBI" id="CHEBI:78442"/>
        <dbReference type="ChEBI" id="CHEBI:78531"/>
        <dbReference type="ChEBI" id="CHEBI:456215"/>
        <dbReference type="EC" id="6.1.1.20"/>
    </reaction>
</comment>
<comment type="cofactor">
    <cofactor evidence="1">
        <name>Mg(2+)</name>
        <dbReference type="ChEBI" id="CHEBI:18420"/>
    </cofactor>
    <text evidence="1">Binds 2 magnesium ions per tetramer.</text>
</comment>
<comment type="subunit">
    <text evidence="1">Tetramer of two alpha and two beta subunits.</text>
</comment>
<comment type="subcellular location">
    <subcellularLocation>
        <location evidence="1">Cytoplasm</location>
    </subcellularLocation>
</comment>
<comment type="similarity">
    <text evidence="1">Belongs to the class-II aminoacyl-tRNA synthetase family. Phe-tRNA synthetase alpha subunit type 1 subfamily.</text>
</comment>
<reference key="1">
    <citation type="journal article" date="2008" name="J. Bacteriol.">
        <title>Genome sequence of Staphylococcus aureus strain Newman and comparative analysis of staphylococcal genomes: polymorphism and evolution of two major pathogenicity islands.</title>
        <authorList>
            <person name="Baba T."/>
            <person name="Bae T."/>
            <person name="Schneewind O."/>
            <person name="Takeuchi F."/>
            <person name="Hiramatsu K."/>
        </authorList>
    </citation>
    <scope>NUCLEOTIDE SEQUENCE [LARGE SCALE GENOMIC DNA]</scope>
    <source>
        <strain>Newman</strain>
    </source>
</reference>
<protein>
    <recommendedName>
        <fullName evidence="1">Phenylalanine--tRNA ligase alpha subunit</fullName>
        <ecNumber evidence="1">6.1.1.20</ecNumber>
    </recommendedName>
    <alternativeName>
        <fullName evidence="1">Phenylalanyl-tRNA synthetase alpha subunit</fullName>
        <shortName evidence="1">PheRS</shortName>
    </alternativeName>
</protein>
<proteinExistence type="inferred from homology"/>
<sequence>MSEQQTMSELKQQALVDINEANDERALQEVKVKYLGKKGSVSGLMKLMKDLPNEDKPAFGQKVNELRQTIQNELDERQQMLVKEKLNKQLAEETIDVSLPGRHIEIGSKHPLTRTIEEIEDLFLGLGYEIVNGYEVEQDHYNFEMLNLPKSHPARDMQDSFYITDEILLRTHTSPVQARTMESRHGQGPVKIICPGKVYRRDSDDATHSHQFTQIEGLVVDKNVKMSDLKGTLELLAKKLFGADREIRLRPSYFPFTEPSVEVDVSCFKCKGKGCNVCKHTGWIEILGAGMVHPNVLEMAGFDSSEYSGFAFGMGPDRIAMLKYGIEDIRHFYTNDVRFLDQFKAVEDRGDM</sequence>
<dbReference type="EC" id="6.1.1.20" evidence="1"/>
<dbReference type="EMBL" id="AP009351">
    <property type="protein sequence ID" value="BAF67321.1"/>
    <property type="molecule type" value="Genomic_DNA"/>
</dbReference>
<dbReference type="RefSeq" id="WP_000003559.1">
    <property type="nucleotide sequence ID" value="NZ_JBBIAE010000001.1"/>
</dbReference>
<dbReference type="SMR" id="A6QG39"/>
<dbReference type="KEGG" id="sae:NWMN_1049"/>
<dbReference type="HOGENOM" id="CLU_025086_0_1_9"/>
<dbReference type="Proteomes" id="UP000006386">
    <property type="component" value="Chromosome"/>
</dbReference>
<dbReference type="GO" id="GO:0005737">
    <property type="term" value="C:cytoplasm"/>
    <property type="evidence" value="ECO:0007669"/>
    <property type="project" value="UniProtKB-SubCell"/>
</dbReference>
<dbReference type="GO" id="GO:0005524">
    <property type="term" value="F:ATP binding"/>
    <property type="evidence" value="ECO:0007669"/>
    <property type="project" value="UniProtKB-UniRule"/>
</dbReference>
<dbReference type="GO" id="GO:0140096">
    <property type="term" value="F:catalytic activity, acting on a protein"/>
    <property type="evidence" value="ECO:0007669"/>
    <property type="project" value="UniProtKB-ARBA"/>
</dbReference>
<dbReference type="GO" id="GO:0000287">
    <property type="term" value="F:magnesium ion binding"/>
    <property type="evidence" value="ECO:0007669"/>
    <property type="project" value="UniProtKB-UniRule"/>
</dbReference>
<dbReference type="GO" id="GO:0004826">
    <property type="term" value="F:phenylalanine-tRNA ligase activity"/>
    <property type="evidence" value="ECO:0007669"/>
    <property type="project" value="UniProtKB-UniRule"/>
</dbReference>
<dbReference type="GO" id="GO:0016740">
    <property type="term" value="F:transferase activity"/>
    <property type="evidence" value="ECO:0007669"/>
    <property type="project" value="UniProtKB-ARBA"/>
</dbReference>
<dbReference type="GO" id="GO:0000049">
    <property type="term" value="F:tRNA binding"/>
    <property type="evidence" value="ECO:0007669"/>
    <property type="project" value="InterPro"/>
</dbReference>
<dbReference type="GO" id="GO:0006432">
    <property type="term" value="P:phenylalanyl-tRNA aminoacylation"/>
    <property type="evidence" value="ECO:0007669"/>
    <property type="project" value="UniProtKB-UniRule"/>
</dbReference>
<dbReference type="CDD" id="cd00496">
    <property type="entry name" value="PheRS_alpha_core"/>
    <property type="match status" value="1"/>
</dbReference>
<dbReference type="FunFam" id="3.30.930.10:FF:000003">
    <property type="entry name" value="Phenylalanine--tRNA ligase alpha subunit"/>
    <property type="match status" value="1"/>
</dbReference>
<dbReference type="Gene3D" id="3.30.930.10">
    <property type="entry name" value="Bira Bifunctional Protein, Domain 2"/>
    <property type="match status" value="1"/>
</dbReference>
<dbReference type="HAMAP" id="MF_00281">
    <property type="entry name" value="Phe_tRNA_synth_alpha1"/>
    <property type="match status" value="1"/>
</dbReference>
<dbReference type="InterPro" id="IPR006195">
    <property type="entry name" value="aa-tRNA-synth_II"/>
</dbReference>
<dbReference type="InterPro" id="IPR045864">
    <property type="entry name" value="aa-tRNA-synth_II/BPL/LPL"/>
</dbReference>
<dbReference type="InterPro" id="IPR004529">
    <property type="entry name" value="Phe-tRNA-synth_IIc_asu"/>
</dbReference>
<dbReference type="InterPro" id="IPR004188">
    <property type="entry name" value="Phe-tRNA_ligase_II_N"/>
</dbReference>
<dbReference type="InterPro" id="IPR022911">
    <property type="entry name" value="Phe_tRNA_ligase_alpha1_bac"/>
</dbReference>
<dbReference type="InterPro" id="IPR002319">
    <property type="entry name" value="Phenylalanyl-tRNA_Synthase"/>
</dbReference>
<dbReference type="InterPro" id="IPR010978">
    <property type="entry name" value="tRNA-bd_arm"/>
</dbReference>
<dbReference type="NCBIfam" id="TIGR00468">
    <property type="entry name" value="pheS"/>
    <property type="match status" value="1"/>
</dbReference>
<dbReference type="PANTHER" id="PTHR11538:SF41">
    <property type="entry name" value="PHENYLALANINE--TRNA LIGASE, MITOCHONDRIAL"/>
    <property type="match status" value="1"/>
</dbReference>
<dbReference type="PANTHER" id="PTHR11538">
    <property type="entry name" value="PHENYLALANYL-TRNA SYNTHETASE"/>
    <property type="match status" value="1"/>
</dbReference>
<dbReference type="Pfam" id="PF02912">
    <property type="entry name" value="Phe_tRNA-synt_N"/>
    <property type="match status" value="1"/>
</dbReference>
<dbReference type="Pfam" id="PF01409">
    <property type="entry name" value="tRNA-synt_2d"/>
    <property type="match status" value="1"/>
</dbReference>
<dbReference type="SUPFAM" id="SSF55681">
    <property type="entry name" value="Class II aaRS and biotin synthetases"/>
    <property type="match status" value="1"/>
</dbReference>
<dbReference type="SUPFAM" id="SSF46589">
    <property type="entry name" value="tRNA-binding arm"/>
    <property type="match status" value="1"/>
</dbReference>
<dbReference type="PROSITE" id="PS50862">
    <property type="entry name" value="AA_TRNA_LIGASE_II"/>
    <property type="match status" value="1"/>
</dbReference>
<evidence type="ECO:0000255" key="1">
    <source>
        <dbReference type="HAMAP-Rule" id="MF_00281"/>
    </source>
</evidence>
<organism>
    <name type="scientific">Staphylococcus aureus (strain Newman)</name>
    <dbReference type="NCBI Taxonomy" id="426430"/>
    <lineage>
        <taxon>Bacteria</taxon>
        <taxon>Bacillati</taxon>
        <taxon>Bacillota</taxon>
        <taxon>Bacilli</taxon>
        <taxon>Bacillales</taxon>
        <taxon>Staphylococcaceae</taxon>
        <taxon>Staphylococcus</taxon>
    </lineage>
</organism>
<accession>A6QG39</accession>
<keyword id="KW-0030">Aminoacyl-tRNA synthetase</keyword>
<keyword id="KW-0067">ATP-binding</keyword>
<keyword id="KW-0963">Cytoplasm</keyword>
<keyword id="KW-0436">Ligase</keyword>
<keyword id="KW-0460">Magnesium</keyword>
<keyword id="KW-0479">Metal-binding</keyword>
<keyword id="KW-0547">Nucleotide-binding</keyword>
<keyword id="KW-0648">Protein biosynthesis</keyword>
<gene>
    <name evidence="1" type="primary">pheS</name>
    <name type="ordered locus">NWMN_1049</name>
</gene>